<accession>P42452</accession>
<accession>Q31RL5</accession>
<organism>
    <name type="scientific">Synechococcus elongatus (strain ATCC 33912 / PCC 7942 / FACHB-805)</name>
    <name type="common">Anacystis nidulans R2</name>
    <dbReference type="NCBI Taxonomy" id="1140"/>
    <lineage>
        <taxon>Bacteria</taxon>
        <taxon>Bacillati</taxon>
        <taxon>Cyanobacteriota</taxon>
        <taxon>Cyanophyceae</taxon>
        <taxon>Synechococcales</taxon>
        <taxon>Synechococcaceae</taxon>
        <taxon>Synechococcus</taxon>
    </lineage>
</organism>
<keyword id="KW-0456">Lyase</keyword>
<keyword id="KW-0627">Porphyrin biosynthesis</keyword>
<keyword id="KW-1185">Reference proteome</keyword>
<name>HEM4_SYNE7</name>
<comment type="function">
    <text evidence="1">Catalyzes cyclization of the linear tetrapyrrole, hydroxymethylbilane, to the macrocyclic uroporphyrinogen III.</text>
</comment>
<comment type="catalytic activity">
    <reaction>
        <text>hydroxymethylbilane = uroporphyrinogen III + H2O</text>
        <dbReference type="Rhea" id="RHEA:18965"/>
        <dbReference type="ChEBI" id="CHEBI:15377"/>
        <dbReference type="ChEBI" id="CHEBI:57308"/>
        <dbReference type="ChEBI" id="CHEBI:57845"/>
        <dbReference type="EC" id="4.2.1.75"/>
    </reaction>
</comment>
<comment type="pathway">
    <text>Porphyrin-containing compound metabolism; protoporphyrin-IX biosynthesis; coproporphyrinogen-III from 5-aminolevulinate: step 3/4.</text>
</comment>
<comment type="similarity">
    <text evidence="2">Belongs to the uroporphyrinogen-III synthase family.</text>
</comment>
<reference key="1">
    <citation type="journal article" date="1994" name="Plant Mol. Biol.">
        <title>Cloning and characterisation of genes for tetrapyrrole biosynthesis from the cyanobacterium Anacystis nidulans R2.</title>
        <authorList>
            <person name="Jones M.C."/>
            <person name="Jenkins J.M."/>
            <person name="Smith A.G."/>
            <person name="Howe C.J."/>
        </authorList>
    </citation>
    <scope>NUCLEOTIDE SEQUENCE [GENOMIC DNA]</scope>
</reference>
<reference key="2">
    <citation type="submission" date="2005-08" db="EMBL/GenBank/DDBJ databases">
        <title>Complete sequence of chromosome 1 of Synechococcus elongatus PCC 7942.</title>
        <authorList>
            <consortium name="US DOE Joint Genome Institute"/>
            <person name="Copeland A."/>
            <person name="Lucas S."/>
            <person name="Lapidus A."/>
            <person name="Barry K."/>
            <person name="Detter J.C."/>
            <person name="Glavina T."/>
            <person name="Hammon N."/>
            <person name="Israni S."/>
            <person name="Pitluck S."/>
            <person name="Schmutz J."/>
            <person name="Larimer F."/>
            <person name="Land M."/>
            <person name="Kyrpides N."/>
            <person name="Lykidis A."/>
            <person name="Golden S."/>
            <person name="Richardson P."/>
        </authorList>
    </citation>
    <scope>NUCLEOTIDE SEQUENCE [LARGE SCALE GENOMIC DNA]</scope>
    <source>
        <strain>ATCC 33912 / PCC 7942 / FACHB-805</strain>
    </source>
</reference>
<dbReference type="EC" id="4.2.1.75"/>
<dbReference type="EMBL" id="X70966">
    <property type="protein sequence ID" value="CAA50303.1"/>
    <property type="molecule type" value="Genomic_DNA"/>
</dbReference>
<dbReference type="EMBL" id="CP000100">
    <property type="protein sequence ID" value="ABB56304.1"/>
    <property type="molecule type" value="Genomic_DNA"/>
</dbReference>
<dbReference type="RefSeq" id="WP_011243553.1">
    <property type="nucleotide sequence ID" value="NZ_JACJTX010000002.1"/>
</dbReference>
<dbReference type="SMR" id="P42452"/>
<dbReference type="STRING" id="1140.Synpcc7942_0272"/>
<dbReference type="PaxDb" id="1140-Synpcc7942_0272"/>
<dbReference type="DNASU" id="3773834"/>
<dbReference type="KEGG" id="syf:Synpcc7942_0272"/>
<dbReference type="eggNOG" id="COG1587">
    <property type="taxonomic scope" value="Bacteria"/>
</dbReference>
<dbReference type="HOGENOM" id="CLU_011276_9_5_3"/>
<dbReference type="OrthoDB" id="9815856at2"/>
<dbReference type="BioCyc" id="SYNEL:SYNPCC7942_0272-MONOMER"/>
<dbReference type="UniPathway" id="UPA00251">
    <property type="reaction ID" value="UER00320"/>
</dbReference>
<dbReference type="Proteomes" id="UP000889800">
    <property type="component" value="Chromosome"/>
</dbReference>
<dbReference type="GO" id="GO:0004852">
    <property type="term" value="F:uroporphyrinogen-III synthase activity"/>
    <property type="evidence" value="ECO:0007669"/>
    <property type="project" value="UniProtKB-EC"/>
</dbReference>
<dbReference type="GO" id="GO:0006782">
    <property type="term" value="P:protoporphyrinogen IX biosynthetic process"/>
    <property type="evidence" value="ECO:0007669"/>
    <property type="project" value="UniProtKB-UniPathway"/>
</dbReference>
<dbReference type="GO" id="GO:0006780">
    <property type="term" value="P:uroporphyrinogen III biosynthetic process"/>
    <property type="evidence" value="ECO:0007669"/>
    <property type="project" value="InterPro"/>
</dbReference>
<dbReference type="CDD" id="cd06578">
    <property type="entry name" value="HemD"/>
    <property type="match status" value="1"/>
</dbReference>
<dbReference type="Gene3D" id="3.40.50.10090">
    <property type="match status" value="2"/>
</dbReference>
<dbReference type="InterPro" id="IPR036108">
    <property type="entry name" value="4pyrrol_syn_uPrphyn_synt_sf"/>
</dbReference>
<dbReference type="InterPro" id="IPR003754">
    <property type="entry name" value="4pyrrol_synth_uPrphyn_synth"/>
</dbReference>
<dbReference type="InterPro" id="IPR039793">
    <property type="entry name" value="UROS/Hem4"/>
</dbReference>
<dbReference type="PANTHER" id="PTHR38042">
    <property type="entry name" value="UROPORPHYRINOGEN-III SYNTHASE, CHLOROPLASTIC"/>
    <property type="match status" value="1"/>
</dbReference>
<dbReference type="PANTHER" id="PTHR38042:SF1">
    <property type="entry name" value="UROPORPHYRINOGEN-III SYNTHASE, CHLOROPLASTIC"/>
    <property type="match status" value="1"/>
</dbReference>
<dbReference type="Pfam" id="PF02602">
    <property type="entry name" value="HEM4"/>
    <property type="match status" value="1"/>
</dbReference>
<dbReference type="SUPFAM" id="SSF69618">
    <property type="entry name" value="HemD-like"/>
    <property type="match status" value="1"/>
</dbReference>
<feature type="chain" id="PRO_0000135247" description="Uroporphyrinogen-III synthase">
    <location>
        <begin position="1"/>
        <end position="264"/>
    </location>
</feature>
<gene>
    <name type="primary">hemD</name>
    <name type="ordered locus">Synpcc7942_0272</name>
</gene>
<proteinExistence type="inferred from homology"/>
<evidence type="ECO:0000250" key="1"/>
<evidence type="ECO:0000305" key="2"/>
<protein>
    <recommendedName>
        <fullName>Uroporphyrinogen-III synthase</fullName>
        <shortName>UROS</shortName>
        <ecNumber>4.2.1.75</ecNumber>
    </recommendedName>
    <alternativeName>
        <fullName>Hydroxymethylbilane hydrolyase [cyclizing]</fullName>
    </alternativeName>
    <alternativeName>
        <fullName>Uroporphyrinogen-III cosynthase</fullName>
    </alternativeName>
</protein>
<sequence>MAEQPLIGKTILTTRAAGQSSPFAAQLRAAGAAVIEMPTLEIGPPSSWLPLDEAIAAIADFDWLILASANAVEAVQQRLAAQQKSWSDVPCAIAVVGQKTAQVLAAQGGKADYIPPEFIAESLVEHFPQPVAGQRLLFPRVETGGREQITQALQSQGAIVVEVPAYESRCPSQIPDDALIALRQAHLNLISFTSSKTVRNFCQLMASNLGVDWSARISGVAIASIGPQTSITCQELLGRVEVEAQEYTLDGLLLAIEQWARQTT</sequence>